<dbReference type="EC" id="3.1.3.16"/>
<dbReference type="EMBL" id="AM263198">
    <property type="protein sequence ID" value="CAK21258.1"/>
    <property type="molecule type" value="Genomic_DNA"/>
</dbReference>
<dbReference type="RefSeq" id="WP_011702610.1">
    <property type="nucleotide sequence ID" value="NC_008555.1"/>
</dbReference>
<dbReference type="SMR" id="A0AJS6"/>
<dbReference type="STRING" id="386043.lwe1840"/>
<dbReference type="GeneID" id="61189741"/>
<dbReference type="KEGG" id="lwe:lwe1840"/>
<dbReference type="eggNOG" id="COG0631">
    <property type="taxonomic scope" value="Bacteria"/>
</dbReference>
<dbReference type="HOGENOM" id="CLU_034545_4_1_9"/>
<dbReference type="OrthoDB" id="9801841at2"/>
<dbReference type="Proteomes" id="UP000000779">
    <property type="component" value="Chromosome"/>
</dbReference>
<dbReference type="GO" id="GO:0005737">
    <property type="term" value="C:cytoplasm"/>
    <property type="evidence" value="ECO:0007669"/>
    <property type="project" value="UniProtKB-SubCell"/>
</dbReference>
<dbReference type="GO" id="GO:0016020">
    <property type="term" value="C:membrane"/>
    <property type="evidence" value="ECO:0007669"/>
    <property type="project" value="UniProtKB-SubCell"/>
</dbReference>
<dbReference type="GO" id="GO:0046872">
    <property type="term" value="F:metal ion binding"/>
    <property type="evidence" value="ECO:0007669"/>
    <property type="project" value="UniProtKB-KW"/>
</dbReference>
<dbReference type="GO" id="GO:0004722">
    <property type="term" value="F:protein serine/threonine phosphatase activity"/>
    <property type="evidence" value="ECO:0007669"/>
    <property type="project" value="UniProtKB-EC"/>
</dbReference>
<dbReference type="CDD" id="cd00143">
    <property type="entry name" value="PP2Cc"/>
    <property type="match status" value="1"/>
</dbReference>
<dbReference type="FunFam" id="3.60.40.10:FF:000002">
    <property type="entry name" value="Serine/threonine phosphatase stp"/>
    <property type="match status" value="1"/>
</dbReference>
<dbReference type="Gene3D" id="3.60.40.10">
    <property type="entry name" value="PPM-type phosphatase domain"/>
    <property type="match status" value="1"/>
</dbReference>
<dbReference type="InterPro" id="IPR015655">
    <property type="entry name" value="PP2C"/>
</dbReference>
<dbReference type="InterPro" id="IPR036457">
    <property type="entry name" value="PPM-type-like_dom_sf"/>
</dbReference>
<dbReference type="InterPro" id="IPR001932">
    <property type="entry name" value="PPM-type_phosphatase-like_dom"/>
</dbReference>
<dbReference type="NCBIfam" id="NF033484">
    <property type="entry name" value="Stp1_PP2C_phos"/>
    <property type="match status" value="1"/>
</dbReference>
<dbReference type="PANTHER" id="PTHR47992">
    <property type="entry name" value="PROTEIN PHOSPHATASE"/>
    <property type="match status" value="1"/>
</dbReference>
<dbReference type="Pfam" id="PF13672">
    <property type="entry name" value="PP2C_2"/>
    <property type="match status" value="1"/>
</dbReference>
<dbReference type="SMART" id="SM00331">
    <property type="entry name" value="PP2C_SIG"/>
    <property type="match status" value="1"/>
</dbReference>
<dbReference type="SMART" id="SM00332">
    <property type="entry name" value="PP2Cc"/>
    <property type="match status" value="1"/>
</dbReference>
<dbReference type="SUPFAM" id="SSF81606">
    <property type="entry name" value="PP2C-like"/>
    <property type="match status" value="1"/>
</dbReference>
<dbReference type="PROSITE" id="PS51746">
    <property type="entry name" value="PPM_2"/>
    <property type="match status" value="1"/>
</dbReference>
<proteinExistence type="inferred from homology"/>
<protein>
    <recommendedName>
        <fullName>Serine/threonine phosphatase stp</fullName>
        <ecNumber>3.1.3.16</ecNumber>
    </recommendedName>
</protein>
<comment type="function">
    <text evidence="1">Protein phosphatase that dephosphorylates EF-Tu.</text>
</comment>
<comment type="catalytic activity">
    <reaction>
        <text>O-phospho-L-seryl-[protein] + H2O = L-seryl-[protein] + phosphate</text>
        <dbReference type="Rhea" id="RHEA:20629"/>
        <dbReference type="Rhea" id="RHEA-COMP:9863"/>
        <dbReference type="Rhea" id="RHEA-COMP:11604"/>
        <dbReference type="ChEBI" id="CHEBI:15377"/>
        <dbReference type="ChEBI" id="CHEBI:29999"/>
        <dbReference type="ChEBI" id="CHEBI:43474"/>
        <dbReference type="ChEBI" id="CHEBI:83421"/>
        <dbReference type="EC" id="3.1.3.16"/>
    </reaction>
</comment>
<comment type="catalytic activity">
    <reaction>
        <text>O-phospho-L-threonyl-[protein] + H2O = L-threonyl-[protein] + phosphate</text>
        <dbReference type="Rhea" id="RHEA:47004"/>
        <dbReference type="Rhea" id="RHEA-COMP:11060"/>
        <dbReference type="Rhea" id="RHEA-COMP:11605"/>
        <dbReference type="ChEBI" id="CHEBI:15377"/>
        <dbReference type="ChEBI" id="CHEBI:30013"/>
        <dbReference type="ChEBI" id="CHEBI:43474"/>
        <dbReference type="ChEBI" id="CHEBI:61977"/>
        <dbReference type="EC" id="3.1.3.16"/>
    </reaction>
</comment>
<comment type="cofactor">
    <cofactor evidence="1">
        <name>Mn(2+)</name>
        <dbReference type="ChEBI" id="CHEBI:29035"/>
    </cofactor>
    <text evidence="1">Binds 2 manganese ions per subunit.</text>
</comment>
<comment type="subcellular location">
    <subcellularLocation>
        <location>Cytoplasm</location>
    </subcellularLocation>
    <subcellularLocation>
        <location evidence="1">Membrane</location>
        <topology evidence="1">Peripheral membrane protein</topology>
    </subcellularLocation>
</comment>
<comment type="similarity">
    <text evidence="4">Belongs to the PP2C family.</text>
</comment>
<sequence>MHAEFRTDRGRIRHHNEDNGGVFENKDNQPIVIVADGMGGHRAGDVASEMAVRLLSDAWKETTALLTAEEIETWLRKEIQEVNKQIVLYAESEMDLNGMGTTLVAAIMAKSQVVIANVGDSRGYLLQNNTLRQLTEDHSLVHELLRTGEISKEDAMNHPRKNILLRALGVEGKVEVDTFVVPFQTTDTLLLCSDGLTNMVPETEMEDILKSKRSLSEKADVFITKANSYGGEDNITVLLVERNLMQKGRDAS</sequence>
<evidence type="ECO:0000250" key="1"/>
<evidence type="ECO:0000255" key="2">
    <source>
        <dbReference type="PROSITE-ProRule" id="PRU01082"/>
    </source>
</evidence>
<evidence type="ECO:0000256" key="3">
    <source>
        <dbReference type="SAM" id="MobiDB-lite"/>
    </source>
</evidence>
<evidence type="ECO:0000305" key="4"/>
<reference key="1">
    <citation type="journal article" date="2006" name="J. Bacteriol.">
        <title>Whole-genome sequence of Listeria welshimeri reveals common steps in genome reduction with Listeria innocua as compared to Listeria monocytogenes.</title>
        <authorList>
            <person name="Hain T."/>
            <person name="Steinweg C."/>
            <person name="Kuenne C.T."/>
            <person name="Billion A."/>
            <person name="Ghai R."/>
            <person name="Chatterjee S.S."/>
            <person name="Domann E."/>
            <person name="Kaerst U."/>
            <person name="Goesmann A."/>
            <person name="Bekel T."/>
            <person name="Bartels D."/>
            <person name="Kaiser O."/>
            <person name="Meyer F."/>
            <person name="Puehler A."/>
            <person name="Weisshaar B."/>
            <person name="Wehland J."/>
            <person name="Liang C."/>
            <person name="Dandekar T."/>
            <person name="Lampidis R."/>
            <person name="Kreft J."/>
            <person name="Goebel W."/>
            <person name="Chakraborty T."/>
        </authorList>
    </citation>
    <scope>NUCLEOTIDE SEQUENCE [LARGE SCALE GENOMIC DNA]</scope>
    <source>
        <strain>ATCC 35897 / DSM 20650 / CCUG 15529 / CIP 8149 / NCTC 11857 / SLCC 5334 / V8</strain>
    </source>
</reference>
<gene>
    <name type="primary">stp</name>
    <name type="ordered locus">lwe1840</name>
</gene>
<name>STP1_LISW6</name>
<accession>A0AJS6</accession>
<feature type="chain" id="PRO_0000363065" description="Serine/threonine phosphatase stp">
    <location>
        <begin position="1"/>
        <end position="252"/>
    </location>
</feature>
<feature type="domain" description="PPM-type phosphatase" evidence="2">
    <location>
        <begin position="2"/>
        <end position="242"/>
    </location>
</feature>
<feature type="region of interest" description="Disordered" evidence="3">
    <location>
        <begin position="1"/>
        <end position="23"/>
    </location>
</feature>
<feature type="compositionally biased region" description="Basic and acidic residues" evidence="3">
    <location>
        <begin position="1"/>
        <end position="18"/>
    </location>
</feature>
<feature type="binding site" evidence="1">
    <location>
        <position position="36"/>
    </location>
    <ligand>
        <name>Mn(2+)</name>
        <dbReference type="ChEBI" id="CHEBI:29035"/>
        <label>1</label>
    </ligand>
</feature>
<feature type="binding site" evidence="1">
    <location>
        <position position="36"/>
    </location>
    <ligand>
        <name>Mn(2+)</name>
        <dbReference type="ChEBI" id="CHEBI:29035"/>
        <label>2</label>
    </ligand>
</feature>
<feature type="binding site" evidence="1">
    <location>
        <position position="37"/>
    </location>
    <ligand>
        <name>Mn(2+)</name>
        <dbReference type="ChEBI" id="CHEBI:29035"/>
        <label>1</label>
    </ligand>
</feature>
<feature type="binding site" evidence="1">
    <location>
        <position position="194"/>
    </location>
    <ligand>
        <name>Mn(2+)</name>
        <dbReference type="ChEBI" id="CHEBI:29035"/>
        <label>2</label>
    </ligand>
</feature>
<feature type="binding site" evidence="1">
    <location>
        <position position="233"/>
    </location>
    <ligand>
        <name>Mn(2+)</name>
        <dbReference type="ChEBI" id="CHEBI:29035"/>
        <label>2</label>
    </ligand>
</feature>
<keyword id="KW-0963">Cytoplasm</keyword>
<keyword id="KW-0378">Hydrolase</keyword>
<keyword id="KW-0464">Manganese</keyword>
<keyword id="KW-0472">Membrane</keyword>
<keyword id="KW-0479">Metal-binding</keyword>
<keyword id="KW-0904">Protein phosphatase</keyword>
<organism>
    <name type="scientific">Listeria welshimeri serovar 6b (strain ATCC 35897 / DSM 20650 / CCUG 15529 / CIP 8149 / NCTC 11857 / SLCC 5334 / V8)</name>
    <dbReference type="NCBI Taxonomy" id="386043"/>
    <lineage>
        <taxon>Bacteria</taxon>
        <taxon>Bacillati</taxon>
        <taxon>Bacillota</taxon>
        <taxon>Bacilli</taxon>
        <taxon>Bacillales</taxon>
        <taxon>Listeriaceae</taxon>
        <taxon>Listeria</taxon>
    </lineage>
</organism>